<sequence length="156" mass="17639">MDTLHEHEAGNLYEEQRVDRVGDALTADAGDDADTLEDGQQQQQQQHQQLLGVNRQMAILLDAPQEPPMAVFPARGGLNGPPRLRKKRSFYTMVKPSPPCESQEPEMCLLLASVTRAMRQVREDQRGEYFANYLVENMTSQNYPNGVGLPQHWGEF</sequence>
<accession>B3P0Q4</accession>
<feature type="chain" id="PRO_0000379441" description="Male-specific protein scotti">
    <location>
        <begin position="1"/>
        <end position="156"/>
    </location>
</feature>
<feature type="region of interest" description="Disordered" evidence="3">
    <location>
        <begin position="26"/>
        <end position="48"/>
    </location>
</feature>
<feature type="glycosylation site" description="N-linked (GlcNAc...) asparagine" evidence="2">
    <location>
        <position position="137"/>
    </location>
</feature>
<organism>
    <name type="scientific">Drosophila erecta</name>
    <name type="common">Fruit fly</name>
    <dbReference type="NCBI Taxonomy" id="7220"/>
    <lineage>
        <taxon>Eukaryota</taxon>
        <taxon>Metazoa</taxon>
        <taxon>Ecdysozoa</taxon>
        <taxon>Arthropoda</taxon>
        <taxon>Hexapoda</taxon>
        <taxon>Insecta</taxon>
        <taxon>Pterygota</taxon>
        <taxon>Neoptera</taxon>
        <taxon>Endopterygota</taxon>
        <taxon>Diptera</taxon>
        <taxon>Brachycera</taxon>
        <taxon>Muscomorpha</taxon>
        <taxon>Ephydroidea</taxon>
        <taxon>Drosophilidae</taxon>
        <taxon>Drosophila</taxon>
        <taxon>Sophophora</taxon>
    </lineage>
</organism>
<name>SOTI_DROER</name>
<dbReference type="EMBL" id="CH954181">
    <property type="protein sequence ID" value="EDV48880.1"/>
    <property type="molecule type" value="Genomic_DNA"/>
</dbReference>
<dbReference type="SMR" id="B3P0Q4"/>
<dbReference type="GlyCosmos" id="B3P0Q4">
    <property type="glycosylation" value="1 site, No reported glycans"/>
</dbReference>
<dbReference type="EnsemblMetazoa" id="FBtr0141392">
    <property type="protein sequence ID" value="FBpp0139884"/>
    <property type="gene ID" value="FBgn0113517"/>
</dbReference>
<dbReference type="EnsemblMetazoa" id="XM_001979886.3">
    <property type="protein sequence ID" value="XP_001979922.1"/>
    <property type="gene ID" value="LOC6552625"/>
</dbReference>
<dbReference type="GeneID" id="6552625"/>
<dbReference type="KEGG" id="der:6552625"/>
<dbReference type="HOGENOM" id="CLU_120156_0_0_1"/>
<dbReference type="OMA" id="LPQRWGQ"/>
<dbReference type="OrthoDB" id="7867455at2759"/>
<dbReference type="PhylomeDB" id="B3P0Q4"/>
<dbReference type="Proteomes" id="UP000008711">
    <property type="component" value="Unassembled WGS sequence"/>
</dbReference>
<dbReference type="GO" id="GO:0007291">
    <property type="term" value="P:sperm individualization"/>
    <property type="evidence" value="ECO:0000250"/>
    <property type="project" value="UniProtKB"/>
</dbReference>
<dbReference type="InterPro" id="IPR031397">
    <property type="entry name" value="Soti"/>
</dbReference>
<dbReference type="Pfam" id="PF17079">
    <property type="entry name" value="SOTI"/>
    <property type="match status" value="1"/>
</dbReference>
<evidence type="ECO:0000250" key="1">
    <source>
        <dbReference type="UniProtKB" id="Q9VFK3"/>
    </source>
</evidence>
<evidence type="ECO:0000255" key="2"/>
<evidence type="ECO:0000256" key="3">
    <source>
        <dbReference type="SAM" id="MobiDB-lite"/>
    </source>
</evidence>
<evidence type="ECO:0000305" key="4"/>
<evidence type="ECO:0000312" key="5">
    <source>
        <dbReference type="EMBL" id="EDV48880.1"/>
    </source>
</evidence>
<keyword id="KW-0217">Developmental protein</keyword>
<keyword id="KW-0221">Differentiation</keyword>
<keyword id="KW-0325">Glycoprotein</keyword>
<keyword id="KW-0744">Spermatogenesis</keyword>
<comment type="function">
    <text evidence="1">Post-meiotically transcribed gene that has a role in late spermiogenesis; required for actin cone progression during spermatid individualization.</text>
</comment>
<comment type="similarity">
    <text evidence="4">Belongs to the male-specific scotti family.</text>
</comment>
<protein>
    <recommendedName>
        <fullName evidence="1">Male-specific protein scotti</fullName>
    </recommendedName>
</protein>
<gene>
    <name evidence="1" type="primary">soti</name>
    <name type="ORF">GG21338</name>
</gene>
<proteinExistence type="inferred from homology"/>
<reference evidence="5" key="1">
    <citation type="journal article" date="2007" name="Nature">
        <title>Evolution of genes and genomes on the Drosophila phylogeny.</title>
        <authorList>
            <consortium name="Drosophila 12 genomes consortium"/>
        </authorList>
    </citation>
    <scope>NUCLEOTIDE SEQUENCE [LARGE SCALE GENOMIC DNA]</scope>
    <source>
        <strain evidence="5">Tucson 14021-0224.01</strain>
    </source>
</reference>